<name>RL23_BACCQ</name>
<feature type="chain" id="PRO_1000184065" description="Large ribosomal subunit protein uL23">
    <location>
        <begin position="1"/>
        <end position="96"/>
    </location>
</feature>
<keyword id="KW-0687">Ribonucleoprotein</keyword>
<keyword id="KW-0689">Ribosomal protein</keyword>
<keyword id="KW-0694">RNA-binding</keyword>
<keyword id="KW-0699">rRNA-binding</keyword>
<sequence>MRDPRDIIKRPVITERSMEMMAEKKYTFDVDVKSNKTEVKDALEAIFGVKVEKVNIMNYKPKAKRVGRHAGFTSRRRKAIVKLTADSKEIEIFQGV</sequence>
<protein>
    <recommendedName>
        <fullName evidence="1">Large ribosomal subunit protein uL23</fullName>
    </recommendedName>
    <alternativeName>
        <fullName evidence="2">50S ribosomal protein L23</fullName>
    </alternativeName>
</protein>
<organism>
    <name type="scientific">Bacillus cereus (strain Q1)</name>
    <dbReference type="NCBI Taxonomy" id="361100"/>
    <lineage>
        <taxon>Bacteria</taxon>
        <taxon>Bacillati</taxon>
        <taxon>Bacillota</taxon>
        <taxon>Bacilli</taxon>
        <taxon>Bacillales</taxon>
        <taxon>Bacillaceae</taxon>
        <taxon>Bacillus</taxon>
        <taxon>Bacillus cereus group</taxon>
    </lineage>
</organism>
<proteinExistence type="inferred from homology"/>
<gene>
    <name evidence="1" type="primary">rplW</name>
    <name type="ordered locus">BCQ_0125</name>
</gene>
<reference key="1">
    <citation type="journal article" date="2009" name="J. Bacteriol.">
        <title>Complete genome sequence of the extremophilic Bacillus cereus strain Q1 with industrial applications.</title>
        <authorList>
            <person name="Xiong Z."/>
            <person name="Jiang Y."/>
            <person name="Qi D."/>
            <person name="Lu H."/>
            <person name="Yang F."/>
            <person name="Yang J."/>
            <person name="Chen L."/>
            <person name="Sun L."/>
            <person name="Xu X."/>
            <person name="Xue Y."/>
            <person name="Zhu Y."/>
            <person name="Jin Q."/>
        </authorList>
    </citation>
    <scope>NUCLEOTIDE SEQUENCE [LARGE SCALE GENOMIC DNA]</scope>
    <source>
        <strain>Q1</strain>
    </source>
</reference>
<accession>B9IZJ6</accession>
<comment type="function">
    <text evidence="1">One of the early assembly proteins it binds 23S rRNA. One of the proteins that surrounds the polypeptide exit tunnel on the outside of the ribosome. Forms the main docking site for trigger factor binding to the ribosome.</text>
</comment>
<comment type="subunit">
    <text evidence="1">Part of the 50S ribosomal subunit. Contacts protein L29, and trigger factor when it is bound to the ribosome.</text>
</comment>
<comment type="similarity">
    <text evidence="1">Belongs to the universal ribosomal protein uL23 family.</text>
</comment>
<dbReference type="EMBL" id="CP000227">
    <property type="protein sequence ID" value="ACM10640.1"/>
    <property type="molecule type" value="Genomic_DNA"/>
</dbReference>
<dbReference type="SMR" id="B9IZJ6"/>
<dbReference type="KEGG" id="bcq:BCQ_0125"/>
<dbReference type="HOGENOM" id="CLU_037562_3_2_9"/>
<dbReference type="Proteomes" id="UP000000441">
    <property type="component" value="Chromosome"/>
</dbReference>
<dbReference type="GO" id="GO:1990904">
    <property type="term" value="C:ribonucleoprotein complex"/>
    <property type="evidence" value="ECO:0007669"/>
    <property type="project" value="UniProtKB-KW"/>
</dbReference>
<dbReference type="GO" id="GO:0005840">
    <property type="term" value="C:ribosome"/>
    <property type="evidence" value="ECO:0007669"/>
    <property type="project" value="UniProtKB-KW"/>
</dbReference>
<dbReference type="GO" id="GO:0019843">
    <property type="term" value="F:rRNA binding"/>
    <property type="evidence" value="ECO:0007669"/>
    <property type="project" value="UniProtKB-UniRule"/>
</dbReference>
<dbReference type="GO" id="GO:0003735">
    <property type="term" value="F:structural constituent of ribosome"/>
    <property type="evidence" value="ECO:0007669"/>
    <property type="project" value="InterPro"/>
</dbReference>
<dbReference type="GO" id="GO:0006412">
    <property type="term" value="P:translation"/>
    <property type="evidence" value="ECO:0007669"/>
    <property type="project" value="UniProtKB-UniRule"/>
</dbReference>
<dbReference type="FunFam" id="3.30.70.330:FF:000001">
    <property type="entry name" value="50S ribosomal protein L23"/>
    <property type="match status" value="1"/>
</dbReference>
<dbReference type="Gene3D" id="3.30.70.330">
    <property type="match status" value="1"/>
</dbReference>
<dbReference type="HAMAP" id="MF_01369_B">
    <property type="entry name" value="Ribosomal_uL23_B"/>
    <property type="match status" value="1"/>
</dbReference>
<dbReference type="InterPro" id="IPR012677">
    <property type="entry name" value="Nucleotide-bd_a/b_plait_sf"/>
</dbReference>
<dbReference type="InterPro" id="IPR013025">
    <property type="entry name" value="Ribosomal_uL23-like"/>
</dbReference>
<dbReference type="InterPro" id="IPR012678">
    <property type="entry name" value="Ribosomal_uL23/eL15/eS24_sf"/>
</dbReference>
<dbReference type="InterPro" id="IPR001014">
    <property type="entry name" value="Ribosomal_uL23_CS"/>
</dbReference>
<dbReference type="NCBIfam" id="NF004363">
    <property type="entry name" value="PRK05738.2-4"/>
    <property type="match status" value="1"/>
</dbReference>
<dbReference type="PANTHER" id="PTHR11620">
    <property type="entry name" value="60S RIBOSOMAL PROTEIN L23A"/>
    <property type="match status" value="1"/>
</dbReference>
<dbReference type="Pfam" id="PF00276">
    <property type="entry name" value="Ribosomal_L23"/>
    <property type="match status" value="1"/>
</dbReference>
<dbReference type="SUPFAM" id="SSF54189">
    <property type="entry name" value="Ribosomal proteins S24e, L23 and L15e"/>
    <property type="match status" value="1"/>
</dbReference>
<dbReference type="PROSITE" id="PS00050">
    <property type="entry name" value="RIBOSOMAL_L23"/>
    <property type="match status" value="1"/>
</dbReference>
<evidence type="ECO:0000255" key="1">
    <source>
        <dbReference type="HAMAP-Rule" id="MF_01369"/>
    </source>
</evidence>
<evidence type="ECO:0000305" key="2"/>